<name>GLMM_ACIC1</name>
<feature type="chain" id="PRO_0000305630" description="Phosphoglucosamine mutase">
    <location>
        <begin position="1"/>
        <end position="461"/>
    </location>
</feature>
<feature type="active site" description="Phosphoserine intermediate" evidence="1">
    <location>
        <position position="118"/>
    </location>
</feature>
<feature type="binding site" description="via phosphate group" evidence="1">
    <location>
        <position position="118"/>
    </location>
    <ligand>
        <name>Mg(2+)</name>
        <dbReference type="ChEBI" id="CHEBI:18420"/>
    </ligand>
</feature>
<feature type="binding site" evidence="1">
    <location>
        <position position="255"/>
    </location>
    <ligand>
        <name>Mg(2+)</name>
        <dbReference type="ChEBI" id="CHEBI:18420"/>
    </ligand>
</feature>
<feature type="binding site" evidence="1">
    <location>
        <position position="257"/>
    </location>
    <ligand>
        <name>Mg(2+)</name>
        <dbReference type="ChEBI" id="CHEBI:18420"/>
    </ligand>
</feature>
<feature type="binding site" evidence="1">
    <location>
        <position position="259"/>
    </location>
    <ligand>
        <name>Mg(2+)</name>
        <dbReference type="ChEBI" id="CHEBI:18420"/>
    </ligand>
</feature>
<feature type="modified residue" description="Phosphoserine" evidence="1">
    <location>
        <position position="118"/>
    </location>
</feature>
<organism>
    <name type="scientific">Acidothermus cellulolyticus (strain ATCC 43068 / DSM 8971 / 11B)</name>
    <dbReference type="NCBI Taxonomy" id="351607"/>
    <lineage>
        <taxon>Bacteria</taxon>
        <taxon>Bacillati</taxon>
        <taxon>Actinomycetota</taxon>
        <taxon>Actinomycetes</taxon>
        <taxon>Acidothermales</taxon>
        <taxon>Acidothermaceae</taxon>
        <taxon>Acidothermus</taxon>
    </lineage>
</organism>
<comment type="function">
    <text evidence="1">Catalyzes the conversion of glucosamine-6-phosphate to glucosamine-1-phosphate.</text>
</comment>
<comment type="catalytic activity">
    <reaction evidence="1">
        <text>alpha-D-glucosamine 1-phosphate = D-glucosamine 6-phosphate</text>
        <dbReference type="Rhea" id="RHEA:23424"/>
        <dbReference type="ChEBI" id="CHEBI:58516"/>
        <dbReference type="ChEBI" id="CHEBI:58725"/>
        <dbReference type="EC" id="5.4.2.10"/>
    </reaction>
</comment>
<comment type="cofactor">
    <cofactor evidence="1">
        <name>Mg(2+)</name>
        <dbReference type="ChEBI" id="CHEBI:18420"/>
    </cofactor>
    <text evidence="1">Binds 1 Mg(2+) ion per subunit.</text>
</comment>
<comment type="PTM">
    <text evidence="1">Activated by phosphorylation.</text>
</comment>
<comment type="similarity">
    <text evidence="1">Belongs to the phosphohexose mutase family.</text>
</comment>
<evidence type="ECO:0000255" key="1">
    <source>
        <dbReference type="HAMAP-Rule" id="MF_01554"/>
    </source>
</evidence>
<gene>
    <name evidence="1" type="primary">glmM</name>
    <name type="ordered locus">Acel_0343</name>
</gene>
<sequence>MAVSGTAAGTGLASTPRLFGTDGVRGIANRDLTAELALDLAVAAAHVLAQAGAFEGHRPLAVVGRDPRASGEFLEAAVVAGLASAGVDVLRLGVLPTPAVAYLTAALDADLGVVLSASHNPMPDNGIKFLARGGHKLPDDIEDAVAARLGEPWTRPVGRFVGRVRDYPEGLDQYVEHVLATSDQRLDGLRVVVDCAHGAASVVSPAVLRRAGATVVPIGCEPDGYNINDGHGSTNIETLQAAVRREGADAGIAHDGDADRCLAVDAAGDVVDGDQILAILALAWQEAGRLAHDTVVATVMSNLGLKLGLAAHGISVVETAVGDRYVLEAMRAGGYVLGGEQSGHIIMLDYATTGDGVLTGLQLLGRMAATGRPLADLARVVRRLPQVLRNVTGVDKTRVDTDPVINKELAAARGELGDGGRVLLRASGTEPVVRVMVEAETEADAERVAERLARVVRERLG</sequence>
<proteinExistence type="inferred from homology"/>
<protein>
    <recommendedName>
        <fullName evidence="1">Phosphoglucosamine mutase</fullName>
        <ecNumber evidence="1">5.4.2.10</ecNumber>
    </recommendedName>
</protein>
<accession>A0LRQ7</accession>
<keyword id="KW-0413">Isomerase</keyword>
<keyword id="KW-0460">Magnesium</keyword>
<keyword id="KW-0479">Metal-binding</keyword>
<keyword id="KW-0597">Phosphoprotein</keyword>
<keyword id="KW-1185">Reference proteome</keyword>
<dbReference type="EC" id="5.4.2.10" evidence="1"/>
<dbReference type="EMBL" id="CP000481">
    <property type="protein sequence ID" value="ABK52117.1"/>
    <property type="molecule type" value="Genomic_DNA"/>
</dbReference>
<dbReference type="RefSeq" id="WP_011719180.1">
    <property type="nucleotide sequence ID" value="NC_008578.1"/>
</dbReference>
<dbReference type="SMR" id="A0LRQ7"/>
<dbReference type="FunCoup" id="A0LRQ7">
    <property type="interactions" value="250"/>
</dbReference>
<dbReference type="STRING" id="351607.Acel_0343"/>
<dbReference type="KEGG" id="ace:Acel_0343"/>
<dbReference type="eggNOG" id="COG1109">
    <property type="taxonomic scope" value="Bacteria"/>
</dbReference>
<dbReference type="HOGENOM" id="CLU_016950_7_0_11"/>
<dbReference type="InParanoid" id="A0LRQ7"/>
<dbReference type="Proteomes" id="UP000008221">
    <property type="component" value="Chromosome"/>
</dbReference>
<dbReference type="GO" id="GO:0005829">
    <property type="term" value="C:cytosol"/>
    <property type="evidence" value="ECO:0007669"/>
    <property type="project" value="TreeGrafter"/>
</dbReference>
<dbReference type="GO" id="GO:0000287">
    <property type="term" value="F:magnesium ion binding"/>
    <property type="evidence" value="ECO:0007669"/>
    <property type="project" value="UniProtKB-UniRule"/>
</dbReference>
<dbReference type="GO" id="GO:0008966">
    <property type="term" value="F:phosphoglucosamine mutase activity"/>
    <property type="evidence" value="ECO:0007669"/>
    <property type="project" value="UniProtKB-UniRule"/>
</dbReference>
<dbReference type="GO" id="GO:0004615">
    <property type="term" value="F:phosphomannomutase activity"/>
    <property type="evidence" value="ECO:0007669"/>
    <property type="project" value="TreeGrafter"/>
</dbReference>
<dbReference type="GO" id="GO:0005975">
    <property type="term" value="P:carbohydrate metabolic process"/>
    <property type="evidence" value="ECO:0007669"/>
    <property type="project" value="InterPro"/>
</dbReference>
<dbReference type="GO" id="GO:0009252">
    <property type="term" value="P:peptidoglycan biosynthetic process"/>
    <property type="evidence" value="ECO:0007669"/>
    <property type="project" value="TreeGrafter"/>
</dbReference>
<dbReference type="GO" id="GO:0006048">
    <property type="term" value="P:UDP-N-acetylglucosamine biosynthetic process"/>
    <property type="evidence" value="ECO:0007669"/>
    <property type="project" value="TreeGrafter"/>
</dbReference>
<dbReference type="CDD" id="cd05802">
    <property type="entry name" value="GlmM"/>
    <property type="match status" value="1"/>
</dbReference>
<dbReference type="FunFam" id="3.30.310.50:FF:000001">
    <property type="entry name" value="Phosphoglucosamine mutase"/>
    <property type="match status" value="1"/>
</dbReference>
<dbReference type="FunFam" id="3.40.120.10:FF:000001">
    <property type="entry name" value="Phosphoglucosamine mutase"/>
    <property type="match status" value="1"/>
</dbReference>
<dbReference type="FunFam" id="3.40.120.10:FF:000002">
    <property type="entry name" value="Phosphoglucosamine mutase"/>
    <property type="match status" value="1"/>
</dbReference>
<dbReference type="Gene3D" id="3.40.120.10">
    <property type="entry name" value="Alpha-D-Glucose-1,6-Bisphosphate, subunit A, domain 3"/>
    <property type="match status" value="3"/>
</dbReference>
<dbReference type="Gene3D" id="3.30.310.50">
    <property type="entry name" value="Alpha-D-phosphohexomutase, C-terminal domain"/>
    <property type="match status" value="1"/>
</dbReference>
<dbReference type="HAMAP" id="MF_01554_B">
    <property type="entry name" value="GlmM_B"/>
    <property type="match status" value="1"/>
</dbReference>
<dbReference type="InterPro" id="IPR005844">
    <property type="entry name" value="A-D-PHexomutase_a/b/a-I"/>
</dbReference>
<dbReference type="InterPro" id="IPR016055">
    <property type="entry name" value="A-D-PHexomutase_a/b/a-I/II/III"/>
</dbReference>
<dbReference type="InterPro" id="IPR005845">
    <property type="entry name" value="A-D-PHexomutase_a/b/a-II"/>
</dbReference>
<dbReference type="InterPro" id="IPR005846">
    <property type="entry name" value="A-D-PHexomutase_a/b/a-III"/>
</dbReference>
<dbReference type="InterPro" id="IPR005843">
    <property type="entry name" value="A-D-PHexomutase_C"/>
</dbReference>
<dbReference type="InterPro" id="IPR036900">
    <property type="entry name" value="A-D-PHexomutase_C_sf"/>
</dbReference>
<dbReference type="InterPro" id="IPR016066">
    <property type="entry name" value="A-D-PHexomutase_CS"/>
</dbReference>
<dbReference type="InterPro" id="IPR005841">
    <property type="entry name" value="Alpha-D-phosphohexomutase_SF"/>
</dbReference>
<dbReference type="InterPro" id="IPR006352">
    <property type="entry name" value="GlmM_bact"/>
</dbReference>
<dbReference type="InterPro" id="IPR050060">
    <property type="entry name" value="Phosphoglucosamine_mutase"/>
</dbReference>
<dbReference type="NCBIfam" id="TIGR01455">
    <property type="entry name" value="glmM"/>
    <property type="match status" value="1"/>
</dbReference>
<dbReference type="PANTHER" id="PTHR42946:SF1">
    <property type="entry name" value="PHOSPHOGLUCOMUTASE (ALPHA-D-GLUCOSE-1,6-BISPHOSPHATE-DEPENDENT)"/>
    <property type="match status" value="1"/>
</dbReference>
<dbReference type="PANTHER" id="PTHR42946">
    <property type="entry name" value="PHOSPHOHEXOSE MUTASE"/>
    <property type="match status" value="1"/>
</dbReference>
<dbReference type="Pfam" id="PF02878">
    <property type="entry name" value="PGM_PMM_I"/>
    <property type="match status" value="1"/>
</dbReference>
<dbReference type="Pfam" id="PF02879">
    <property type="entry name" value="PGM_PMM_II"/>
    <property type="match status" value="1"/>
</dbReference>
<dbReference type="Pfam" id="PF02880">
    <property type="entry name" value="PGM_PMM_III"/>
    <property type="match status" value="1"/>
</dbReference>
<dbReference type="Pfam" id="PF00408">
    <property type="entry name" value="PGM_PMM_IV"/>
    <property type="match status" value="1"/>
</dbReference>
<dbReference type="PRINTS" id="PR00509">
    <property type="entry name" value="PGMPMM"/>
</dbReference>
<dbReference type="SUPFAM" id="SSF55957">
    <property type="entry name" value="Phosphoglucomutase, C-terminal domain"/>
    <property type="match status" value="1"/>
</dbReference>
<dbReference type="SUPFAM" id="SSF53738">
    <property type="entry name" value="Phosphoglucomutase, first 3 domains"/>
    <property type="match status" value="3"/>
</dbReference>
<dbReference type="PROSITE" id="PS00710">
    <property type="entry name" value="PGM_PMM"/>
    <property type="match status" value="1"/>
</dbReference>
<reference key="1">
    <citation type="journal article" date="2009" name="Genome Res.">
        <title>Complete genome of the cellulolytic thermophile Acidothermus cellulolyticus 11B provides insights into its ecophysiological and evolutionary adaptations.</title>
        <authorList>
            <person name="Barabote R.D."/>
            <person name="Xie G."/>
            <person name="Leu D.H."/>
            <person name="Normand P."/>
            <person name="Necsulea A."/>
            <person name="Daubin V."/>
            <person name="Medigue C."/>
            <person name="Adney W.S."/>
            <person name="Xu X.C."/>
            <person name="Lapidus A."/>
            <person name="Parales R.E."/>
            <person name="Detter C."/>
            <person name="Pujic P."/>
            <person name="Bruce D."/>
            <person name="Lavire C."/>
            <person name="Challacombe J.F."/>
            <person name="Brettin T.S."/>
            <person name="Berry A.M."/>
        </authorList>
    </citation>
    <scope>NUCLEOTIDE SEQUENCE [LARGE SCALE GENOMIC DNA]</scope>
    <source>
        <strain>ATCC 43068 / DSM 8971 / 11B</strain>
    </source>
</reference>